<accession>Q8X984</accession>
<gene>
    <name evidence="1" type="primary">guaC</name>
    <name type="ordered locus">Z0114</name>
    <name type="ordered locus">ECs0108</name>
</gene>
<protein>
    <recommendedName>
        <fullName evidence="1">GMP reductase</fullName>
        <ecNumber evidence="1">1.7.1.7</ecNumber>
    </recommendedName>
    <alternativeName>
        <fullName evidence="1">Guanosine 5'-monophosphate oxidoreductase</fullName>
        <shortName evidence="1">Guanosine monophosphate reductase</shortName>
    </alternativeName>
</protein>
<reference key="1">
    <citation type="journal article" date="2001" name="Nature">
        <title>Genome sequence of enterohaemorrhagic Escherichia coli O157:H7.</title>
        <authorList>
            <person name="Perna N.T."/>
            <person name="Plunkett G. III"/>
            <person name="Burland V."/>
            <person name="Mau B."/>
            <person name="Glasner J.D."/>
            <person name="Rose D.J."/>
            <person name="Mayhew G.F."/>
            <person name="Evans P.S."/>
            <person name="Gregor J."/>
            <person name="Kirkpatrick H.A."/>
            <person name="Posfai G."/>
            <person name="Hackett J."/>
            <person name="Klink S."/>
            <person name="Boutin A."/>
            <person name="Shao Y."/>
            <person name="Miller L."/>
            <person name="Grotbeck E.J."/>
            <person name="Davis N.W."/>
            <person name="Lim A."/>
            <person name="Dimalanta E.T."/>
            <person name="Potamousis K."/>
            <person name="Apodaca J."/>
            <person name="Anantharaman T.S."/>
            <person name="Lin J."/>
            <person name="Yen G."/>
            <person name="Schwartz D.C."/>
            <person name="Welch R.A."/>
            <person name="Blattner F.R."/>
        </authorList>
    </citation>
    <scope>NUCLEOTIDE SEQUENCE [LARGE SCALE GENOMIC DNA]</scope>
    <source>
        <strain>O157:H7 / EDL933 / ATCC 700927 / EHEC</strain>
    </source>
</reference>
<reference key="2">
    <citation type="journal article" date="2001" name="DNA Res.">
        <title>Complete genome sequence of enterohemorrhagic Escherichia coli O157:H7 and genomic comparison with a laboratory strain K-12.</title>
        <authorList>
            <person name="Hayashi T."/>
            <person name="Makino K."/>
            <person name="Ohnishi M."/>
            <person name="Kurokawa K."/>
            <person name="Ishii K."/>
            <person name="Yokoyama K."/>
            <person name="Han C.-G."/>
            <person name="Ohtsubo E."/>
            <person name="Nakayama K."/>
            <person name="Murata T."/>
            <person name="Tanaka M."/>
            <person name="Tobe T."/>
            <person name="Iida T."/>
            <person name="Takami H."/>
            <person name="Honda T."/>
            <person name="Sasakawa C."/>
            <person name="Ogasawara N."/>
            <person name="Yasunaga T."/>
            <person name="Kuhara S."/>
            <person name="Shiba T."/>
            <person name="Hattori M."/>
            <person name="Shinagawa H."/>
        </authorList>
    </citation>
    <scope>NUCLEOTIDE SEQUENCE [LARGE SCALE GENOMIC DNA]</scope>
    <source>
        <strain>O157:H7 / Sakai / RIMD 0509952 / EHEC</strain>
    </source>
</reference>
<dbReference type="EC" id="1.7.1.7" evidence="1"/>
<dbReference type="EMBL" id="AE005174">
    <property type="protein sequence ID" value="AAG54408.1"/>
    <property type="molecule type" value="Genomic_DNA"/>
</dbReference>
<dbReference type="EMBL" id="BA000007">
    <property type="protein sequence ID" value="BAB33531.1"/>
    <property type="molecule type" value="Genomic_DNA"/>
</dbReference>
<dbReference type="PIR" id="D85493">
    <property type="entry name" value="D85493"/>
</dbReference>
<dbReference type="PIR" id="D90642">
    <property type="entry name" value="D90642"/>
</dbReference>
<dbReference type="RefSeq" id="NP_308135.1">
    <property type="nucleotide sequence ID" value="NC_002695.1"/>
</dbReference>
<dbReference type="RefSeq" id="WP_001217330.1">
    <property type="nucleotide sequence ID" value="NZ_VOAI01000002.1"/>
</dbReference>
<dbReference type="SMR" id="Q8X984"/>
<dbReference type="STRING" id="155864.Z0114"/>
<dbReference type="GeneID" id="913617"/>
<dbReference type="KEGG" id="ece:Z0114"/>
<dbReference type="KEGG" id="ecs:ECs_0108"/>
<dbReference type="PATRIC" id="fig|386585.9.peg.207"/>
<dbReference type="eggNOG" id="COG0516">
    <property type="taxonomic scope" value="Bacteria"/>
</dbReference>
<dbReference type="HOGENOM" id="CLU_022552_5_3_6"/>
<dbReference type="OMA" id="AYKEYFG"/>
<dbReference type="Proteomes" id="UP000000558">
    <property type="component" value="Chromosome"/>
</dbReference>
<dbReference type="Proteomes" id="UP000002519">
    <property type="component" value="Chromosome"/>
</dbReference>
<dbReference type="GO" id="GO:0005829">
    <property type="term" value="C:cytosol"/>
    <property type="evidence" value="ECO:0007669"/>
    <property type="project" value="TreeGrafter"/>
</dbReference>
<dbReference type="GO" id="GO:1902560">
    <property type="term" value="C:GMP reductase complex"/>
    <property type="evidence" value="ECO:0007669"/>
    <property type="project" value="InterPro"/>
</dbReference>
<dbReference type="GO" id="GO:0003920">
    <property type="term" value="F:GMP reductase activity"/>
    <property type="evidence" value="ECO:0007669"/>
    <property type="project" value="UniProtKB-UniRule"/>
</dbReference>
<dbReference type="GO" id="GO:0046872">
    <property type="term" value="F:metal ion binding"/>
    <property type="evidence" value="ECO:0007669"/>
    <property type="project" value="UniProtKB-KW"/>
</dbReference>
<dbReference type="GO" id="GO:0006163">
    <property type="term" value="P:purine nucleotide metabolic process"/>
    <property type="evidence" value="ECO:0007669"/>
    <property type="project" value="UniProtKB-UniRule"/>
</dbReference>
<dbReference type="CDD" id="cd00381">
    <property type="entry name" value="IMPDH"/>
    <property type="match status" value="1"/>
</dbReference>
<dbReference type="FunFam" id="3.20.20.70:FF:000012">
    <property type="entry name" value="GMP reductase"/>
    <property type="match status" value="1"/>
</dbReference>
<dbReference type="Gene3D" id="3.20.20.70">
    <property type="entry name" value="Aldolase class I"/>
    <property type="match status" value="1"/>
</dbReference>
<dbReference type="HAMAP" id="MF_00596">
    <property type="entry name" value="GMP_reduct_type1"/>
    <property type="match status" value="1"/>
</dbReference>
<dbReference type="InterPro" id="IPR013785">
    <property type="entry name" value="Aldolase_TIM"/>
</dbReference>
<dbReference type="InterPro" id="IPR050139">
    <property type="entry name" value="GMP_reductase"/>
</dbReference>
<dbReference type="InterPro" id="IPR005993">
    <property type="entry name" value="GMPR"/>
</dbReference>
<dbReference type="InterPro" id="IPR015875">
    <property type="entry name" value="IMP_DH/GMP_Rdtase_CS"/>
</dbReference>
<dbReference type="InterPro" id="IPR001093">
    <property type="entry name" value="IMP_DH_GMPRt"/>
</dbReference>
<dbReference type="NCBIfam" id="TIGR01305">
    <property type="entry name" value="GMP_reduct_1"/>
    <property type="match status" value="1"/>
</dbReference>
<dbReference type="NCBIfam" id="NF003470">
    <property type="entry name" value="PRK05096.1"/>
    <property type="match status" value="1"/>
</dbReference>
<dbReference type="PANTHER" id="PTHR43170">
    <property type="entry name" value="GMP REDUCTASE"/>
    <property type="match status" value="1"/>
</dbReference>
<dbReference type="PANTHER" id="PTHR43170:SF5">
    <property type="entry name" value="GMP REDUCTASE"/>
    <property type="match status" value="1"/>
</dbReference>
<dbReference type="Pfam" id="PF00478">
    <property type="entry name" value="IMPDH"/>
    <property type="match status" value="1"/>
</dbReference>
<dbReference type="PIRSF" id="PIRSF000235">
    <property type="entry name" value="GMP_reductase"/>
    <property type="match status" value="1"/>
</dbReference>
<dbReference type="SMART" id="SM01240">
    <property type="entry name" value="IMPDH"/>
    <property type="match status" value="1"/>
</dbReference>
<dbReference type="SUPFAM" id="SSF51412">
    <property type="entry name" value="Inosine monophosphate dehydrogenase (IMPDH)"/>
    <property type="match status" value="1"/>
</dbReference>
<dbReference type="PROSITE" id="PS00487">
    <property type="entry name" value="IMP_DH_GMP_RED"/>
    <property type="match status" value="1"/>
</dbReference>
<organism>
    <name type="scientific">Escherichia coli O157:H7</name>
    <dbReference type="NCBI Taxonomy" id="83334"/>
    <lineage>
        <taxon>Bacteria</taxon>
        <taxon>Pseudomonadati</taxon>
        <taxon>Pseudomonadota</taxon>
        <taxon>Gammaproteobacteria</taxon>
        <taxon>Enterobacterales</taxon>
        <taxon>Enterobacteriaceae</taxon>
        <taxon>Escherichia</taxon>
    </lineage>
</organism>
<comment type="function">
    <text evidence="1">Catalyzes the irreversible NADPH-dependent deamination of GMP to IMP. It functions in the conversion of nucleobase, nucleoside and nucleotide derivatives of G to A nucleotides, and in maintaining the intracellular balance of A and G nucleotides.</text>
</comment>
<comment type="catalytic activity">
    <reaction evidence="1">
        <text>IMP + NH4(+) + NADP(+) = GMP + NADPH + 2 H(+)</text>
        <dbReference type="Rhea" id="RHEA:17185"/>
        <dbReference type="ChEBI" id="CHEBI:15378"/>
        <dbReference type="ChEBI" id="CHEBI:28938"/>
        <dbReference type="ChEBI" id="CHEBI:57783"/>
        <dbReference type="ChEBI" id="CHEBI:58053"/>
        <dbReference type="ChEBI" id="CHEBI:58115"/>
        <dbReference type="ChEBI" id="CHEBI:58349"/>
        <dbReference type="EC" id="1.7.1.7"/>
    </reaction>
</comment>
<comment type="subunit">
    <text evidence="1">Homotetramer.</text>
</comment>
<comment type="similarity">
    <text evidence="1">Belongs to the IMPDH/GMPR family. GuaC type 1 subfamily.</text>
</comment>
<sequence length="347" mass="37398">MRIEEDLKLGFKDVLIRPKRSTLKSRSDVELERQFTFKHSGQSWSGVPIIAANMDTVGTFSMASALASFDILTAVHKHYSVEEWQAFINNSSADVLKHVMVSTGTSDADFEKTKQILDLNPALNFVCIDVANGYSEHFVQFVAKAREAWPTKTICAGNVVTGEMCEELILSGADIVKVGIGPGSVCTTRVKTGVGYPQLSAVIECADAAHGLGGMIISDGGCTTPGDVAKAFGGGADFVMLGGMLAGHEESGGRIVEENGEKFMLFYGMSSESAMKRHVGGVAEYRAAEGKTVKLPLRGPVENTARDILGGLRSACTYVGASRLKELTKRTTFIRVQEQENRIFNNL</sequence>
<name>GUAC_ECO57</name>
<proteinExistence type="inferred from homology"/>
<keyword id="KW-0479">Metal-binding</keyword>
<keyword id="KW-0521">NADP</keyword>
<keyword id="KW-0560">Oxidoreductase</keyword>
<keyword id="KW-0630">Potassium</keyword>
<keyword id="KW-1185">Reference proteome</keyword>
<feature type="chain" id="PRO_0000093737" description="GMP reductase">
    <location>
        <begin position="1"/>
        <end position="347"/>
    </location>
</feature>
<feature type="active site" description="Thioimidate intermediate" evidence="1">
    <location>
        <position position="186"/>
    </location>
</feature>
<feature type="binding site" evidence="1">
    <location>
        <begin position="108"/>
        <end position="131"/>
    </location>
    <ligand>
        <name>NADP(+)</name>
        <dbReference type="ChEBI" id="CHEBI:58349"/>
    </ligand>
</feature>
<feature type="binding site" evidence="1">
    <location>
        <position position="181"/>
    </location>
    <ligand>
        <name>K(+)</name>
        <dbReference type="ChEBI" id="CHEBI:29103"/>
    </ligand>
</feature>
<feature type="binding site" evidence="1">
    <location>
        <position position="183"/>
    </location>
    <ligand>
        <name>K(+)</name>
        <dbReference type="ChEBI" id="CHEBI:29103"/>
    </ligand>
</feature>
<feature type="binding site" evidence="1">
    <location>
        <begin position="216"/>
        <end position="239"/>
    </location>
    <ligand>
        <name>NADP(+)</name>
        <dbReference type="ChEBI" id="CHEBI:58349"/>
    </ligand>
</feature>
<evidence type="ECO:0000255" key="1">
    <source>
        <dbReference type="HAMAP-Rule" id="MF_00596"/>
    </source>
</evidence>